<comment type="function">
    <text evidence="1">NDH shuttles electrons from NAD(P)H:plastoquinone, via FMN and iron-sulfur (Fe-S) centers, to quinones in the photosynthetic chain and possibly in a chloroplast respiratory chain. The immediate electron acceptor for the enzyme in this species is believed to be plastoquinone. Couples the redox reaction to proton translocation, and thus conserves the redox energy in a proton gradient.</text>
</comment>
<comment type="catalytic activity">
    <reaction evidence="1">
        <text>a plastoquinone + NADH + (n+1) H(+)(in) = a plastoquinol + NAD(+) + n H(+)(out)</text>
        <dbReference type="Rhea" id="RHEA:42608"/>
        <dbReference type="Rhea" id="RHEA-COMP:9561"/>
        <dbReference type="Rhea" id="RHEA-COMP:9562"/>
        <dbReference type="ChEBI" id="CHEBI:15378"/>
        <dbReference type="ChEBI" id="CHEBI:17757"/>
        <dbReference type="ChEBI" id="CHEBI:57540"/>
        <dbReference type="ChEBI" id="CHEBI:57945"/>
        <dbReference type="ChEBI" id="CHEBI:62192"/>
    </reaction>
</comment>
<comment type="catalytic activity">
    <reaction evidence="1">
        <text>a plastoquinone + NADPH + (n+1) H(+)(in) = a plastoquinol + NADP(+) + n H(+)(out)</text>
        <dbReference type="Rhea" id="RHEA:42612"/>
        <dbReference type="Rhea" id="RHEA-COMP:9561"/>
        <dbReference type="Rhea" id="RHEA-COMP:9562"/>
        <dbReference type="ChEBI" id="CHEBI:15378"/>
        <dbReference type="ChEBI" id="CHEBI:17757"/>
        <dbReference type="ChEBI" id="CHEBI:57783"/>
        <dbReference type="ChEBI" id="CHEBI:58349"/>
        <dbReference type="ChEBI" id="CHEBI:62192"/>
    </reaction>
</comment>
<comment type="subunit">
    <text evidence="1">NDH is composed of at least 16 different subunits, 5 of which are encoded in the nucleus.</text>
</comment>
<comment type="subcellular location">
    <subcellularLocation>
        <location evidence="1">Plastid</location>
        <location evidence="1">Chloroplast thylakoid membrane</location>
        <topology evidence="1">Multi-pass membrane protein</topology>
    </subcellularLocation>
</comment>
<comment type="similarity">
    <text evidence="1">Belongs to the complex I subunit 3 family.</text>
</comment>
<sequence>MFLLYEYDIFWAFLIISSVIPILAFRISGLLAPTSIGPEKLSSYESGIEPMGDAWLQFRIRYYMFALVFVVFDVETIFLYPWALSFDILGVSVFIEALIFVLILVLGLVYAWRKGALEWS</sequence>
<gene>
    <name evidence="1" type="primary">ndhC</name>
</gene>
<proteinExistence type="inferred from homology"/>
<evidence type="ECO:0000255" key="1">
    <source>
        <dbReference type="HAMAP-Rule" id="MF_01394"/>
    </source>
</evidence>
<protein>
    <recommendedName>
        <fullName evidence="1">NAD(P)H-quinone oxidoreductase subunit 3, chloroplastic</fullName>
        <ecNumber evidence="1">7.1.1.-</ecNumber>
    </recommendedName>
    <alternativeName>
        <fullName evidence="1">NAD(P)H dehydrogenase subunit 3</fullName>
    </alternativeName>
    <alternativeName>
        <fullName evidence="1">NADH-plastoquinone oxidoreductase subunit 3</fullName>
    </alternativeName>
</protein>
<name>NU3C_OENBI</name>
<dbReference type="EC" id="7.1.1.-" evidence="1"/>
<dbReference type="EMBL" id="EU262889">
    <property type="protein sequence ID" value="ABW98858.1"/>
    <property type="molecule type" value="Genomic_DNA"/>
</dbReference>
<dbReference type="RefSeq" id="YP_001687353.1">
    <property type="nucleotide sequence ID" value="NC_010361.1"/>
</dbReference>
<dbReference type="SMR" id="B0Z4U6"/>
<dbReference type="GeneID" id="5952054"/>
<dbReference type="GO" id="GO:0009535">
    <property type="term" value="C:chloroplast thylakoid membrane"/>
    <property type="evidence" value="ECO:0007669"/>
    <property type="project" value="UniProtKB-SubCell"/>
</dbReference>
<dbReference type="GO" id="GO:0030964">
    <property type="term" value="C:NADH dehydrogenase complex"/>
    <property type="evidence" value="ECO:0007669"/>
    <property type="project" value="TreeGrafter"/>
</dbReference>
<dbReference type="GO" id="GO:0008137">
    <property type="term" value="F:NADH dehydrogenase (ubiquinone) activity"/>
    <property type="evidence" value="ECO:0007669"/>
    <property type="project" value="InterPro"/>
</dbReference>
<dbReference type="GO" id="GO:0048038">
    <property type="term" value="F:quinone binding"/>
    <property type="evidence" value="ECO:0007669"/>
    <property type="project" value="UniProtKB-KW"/>
</dbReference>
<dbReference type="GO" id="GO:0019684">
    <property type="term" value="P:photosynthesis, light reaction"/>
    <property type="evidence" value="ECO:0007669"/>
    <property type="project" value="UniProtKB-UniRule"/>
</dbReference>
<dbReference type="FunFam" id="1.20.58.1610:FF:000001">
    <property type="entry name" value="NAD(P)H-quinone oxidoreductase subunit 3, chloroplastic"/>
    <property type="match status" value="1"/>
</dbReference>
<dbReference type="Gene3D" id="1.20.58.1610">
    <property type="entry name" value="NADH:ubiquinone/plastoquinone oxidoreductase, chain 3"/>
    <property type="match status" value="1"/>
</dbReference>
<dbReference type="HAMAP" id="MF_01394">
    <property type="entry name" value="NDH1_NuoA"/>
    <property type="match status" value="1"/>
</dbReference>
<dbReference type="InterPro" id="IPR023043">
    <property type="entry name" value="NAD(P)H_OxRDtase_bac/plastid"/>
</dbReference>
<dbReference type="InterPro" id="IPR000440">
    <property type="entry name" value="NADH_UbQ/plastoQ_OxRdtase_su3"/>
</dbReference>
<dbReference type="InterPro" id="IPR038430">
    <property type="entry name" value="NDAH_ubi_oxred_su3_sf"/>
</dbReference>
<dbReference type="PANTHER" id="PTHR11058">
    <property type="entry name" value="NADH-UBIQUINONE OXIDOREDUCTASE CHAIN 3"/>
    <property type="match status" value="1"/>
</dbReference>
<dbReference type="PANTHER" id="PTHR11058:SF9">
    <property type="entry name" value="NADH-UBIQUINONE OXIDOREDUCTASE CHAIN 3"/>
    <property type="match status" value="1"/>
</dbReference>
<dbReference type="Pfam" id="PF00507">
    <property type="entry name" value="Oxidored_q4"/>
    <property type="match status" value="1"/>
</dbReference>
<accession>B0Z4U6</accession>
<keyword id="KW-0150">Chloroplast</keyword>
<keyword id="KW-0472">Membrane</keyword>
<keyword id="KW-0520">NAD</keyword>
<keyword id="KW-0521">NADP</keyword>
<keyword id="KW-0934">Plastid</keyword>
<keyword id="KW-0618">Plastoquinone</keyword>
<keyword id="KW-0874">Quinone</keyword>
<keyword id="KW-0793">Thylakoid</keyword>
<keyword id="KW-1278">Translocase</keyword>
<keyword id="KW-0812">Transmembrane</keyword>
<keyword id="KW-1133">Transmembrane helix</keyword>
<keyword id="KW-0813">Transport</keyword>
<organism>
    <name type="scientific">Oenothera biennis</name>
    <name type="common">German evening primrose</name>
    <name type="synonym">Onagra biennis</name>
    <dbReference type="NCBI Taxonomy" id="3942"/>
    <lineage>
        <taxon>Eukaryota</taxon>
        <taxon>Viridiplantae</taxon>
        <taxon>Streptophyta</taxon>
        <taxon>Embryophyta</taxon>
        <taxon>Tracheophyta</taxon>
        <taxon>Spermatophyta</taxon>
        <taxon>Magnoliopsida</taxon>
        <taxon>eudicotyledons</taxon>
        <taxon>Gunneridae</taxon>
        <taxon>Pentapetalae</taxon>
        <taxon>rosids</taxon>
        <taxon>malvids</taxon>
        <taxon>Myrtales</taxon>
        <taxon>Onagraceae</taxon>
        <taxon>Onagroideae</taxon>
        <taxon>Onagreae</taxon>
        <taxon>Oenothera</taxon>
    </lineage>
</organism>
<reference key="1">
    <citation type="journal article" date="2008" name="Nucleic Acids Res.">
        <title>The complete nucleotide sequences of the five genetically distinct plastid genomes of Oenothera, subsection Oenothera: I. Sequence evaluation and plastome evolution.</title>
        <authorList>
            <person name="Greiner S."/>
            <person name="Wang X."/>
            <person name="Rauwolf U."/>
            <person name="Silber M.V."/>
            <person name="Mayer K."/>
            <person name="Meurer J."/>
            <person name="Haberer G."/>
            <person name="Herrmann R.G."/>
        </authorList>
    </citation>
    <scope>NUCLEOTIDE SEQUENCE [LARGE SCALE GENOMIC DNA]</scope>
    <source>
        <strain>cv. Suaveolens Grado</strain>
    </source>
</reference>
<geneLocation type="chloroplast"/>
<feature type="chain" id="PRO_0000362858" description="NAD(P)H-quinone oxidoreductase subunit 3, chloroplastic">
    <location>
        <begin position="1"/>
        <end position="120"/>
    </location>
</feature>
<feature type="transmembrane region" description="Helical" evidence="1">
    <location>
        <begin position="2"/>
        <end position="22"/>
    </location>
</feature>
<feature type="transmembrane region" description="Helical" evidence="1">
    <location>
        <begin position="64"/>
        <end position="84"/>
    </location>
</feature>
<feature type="transmembrane region" description="Helical" evidence="1">
    <location>
        <begin position="88"/>
        <end position="108"/>
    </location>
</feature>